<dbReference type="EC" id="4.2.1.33" evidence="1"/>
<dbReference type="EMBL" id="BX571658">
    <property type="protein sequence ID" value="CAE09693.1"/>
    <property type="molecule type" value="Genomic_DNA"/>
</dbReference>
<dbReference type="RefSeq" id="WP_011138493.1">
    <property type="nucleotide sequence ID" value="NC_005090.1"/>
</dbReference>
<dbReference type="SMR" id="Q7M9Z9"/>
<dbReference type="STRING" id="273121.WS0559"/>
<dbReference type="KEGG" id="wsu:WS0559"/>
<dbReference type="eggNOG" id="COG0065">
    <property type="taxonomic scope" value="Bacteria"/>
</dbReference>
<dbReference type="HOGENOM" id="CLU_006714_3_4_7"/>
<dbReference type="UniPathway" id="UPA00048">
    <property type="reaction ID" value="UER00071"/>
</dbReference>
<dbReference type="Proteomes" id="UP000000422">
    <property type="component" value="Chromosome"/>
</dbReference>
<dbReference type="GO" id="GO:0003861">
    <property type="term" value="F:3-isopropylmalate dehydratase activity"/>
    <property type="evidence" value="ECO:0007669"/>
    <property type="project" value="UniProtKB-UniRule"/>
</dbReference>
<dbReference type="GO" id="GO:0051539">
    <property type="term" value="F:4 iron, 4 sulfur cluster binding"/>
    <property type="evidence" value="ECO:0007669"/>
    <property type="project" value="UniProtKB-KW"/>
</dbReference>
<dbReference type="GO" id="GO:0046872">
    <property type="term" value="F:metal ion binding"/>
    <property type="evidence" value="ECO:0007669"/>
    <property type="project" value="UniProtKB-KW"/>
</dbReference>
<dbReference type="GO" id="GO:0009098">
    <property type="term" value="P:L-leucine biosynthetic process"/>
    <property type="evidence" value="ECO:0007669"/>
    <property type="project" value="UniProtKB-UniRule"/>
</dbReference>
<dbReference type="CDD" id="cd01583">
    <property type="entry name" value="IPMI"/>
    <property type="match status" value="1"/>
</dbReference>
<dbReference type="Gene3D" id="3.30.499.10">
    <property type="entry name" value="Aconitase, domain 3"/>
    <property type="match status" value="2"/>
</dbReference>
<dbReference type="HAMAP" id="MF_01027">
    <property type="entry name" value="LeuC_type2"/>
    <property type="match status" value="1"/>
</dbReference>
<dbReference type="InterPro" id="IPR015931">
    <property type="entry name" value="Acnase/IPM_dHydase_lsu_aba_1/3"/>
</dbReference>
<dbReference type="InterPro" id="IPR001030">
    <property type="entry name" value="Acoase/IPM_deHydtase_lsu_aba"/>
</dbReference>
<dbReference type="InterPro" id="IPR018136">
    <property type="entry name" value="Aconitase_4Fe-4S_BS"/>
</dbReference>
<dbReference type="InterPro" id="IPR036008">
    <property type="entry name" value="Aconitase_4Fe-4S_dom"/>
</dbReference>
<dbReference type="InterPro" id="IPR011826">
    <property type="entry name" value="HAcnase/IPMdehydase_lsu_prok"/>
</dbReference>
<dbReference type="InterPro" id="IPR006251">
    <property type="entry name" value="Homoacnase/IPMdehydase_lsu"/>
</dbReference>
<dbReference type="InterPro" id="IPR050067">
    <property type="entry name" value="IPM_dehydratase_rel_enz"/>
</dbReference>
<dbReference type="InterPro" id="IPR033941">
    <property type="entry name" value="IPMI_cat"/>
</dbReference>
<dbReference type="InterPro" id="IPR011823">
    <property type="entry name" value="IsopropMal_deHydtase_lsu_bac"/>
</dbReference>
<dbReference type="NCBIfam" id="TIGR01343">
    <property type="entry name" value="hacA_fam"/>
    <property type="match status" value="1"/>
</dbReference>
<dbReference type="NCBIfam" id="TIGR02086">
    <property type="entry name" value="IPMI_arch"/>
    <property type="match status" value="1"/>
</dbReference>
<dbReference type="NCBIfam" id="TIGR02083">
    <property type="entry name" value="LEU2"/>
    <property type="match status" value="1"/>
</dbReference>
<dbReference type="NCBIfam" id="NF001614">
    <property type="entry name" value="PRK00402.1"/>
    <property type="match status" value="1"/>
</dbReference>
<dbReference type="PANTHER" id="PTHR43822:SF16">
    <property type="entry name" value="3-ISOPROPYLMALATE DEHYDRATASE LARGE SUBUNIT 2"/>
    <property type="match status" value="1"/>
</dbReference>
<dbReference type="PANTHER" id="PTHR43822">
    <property type="entry name" value="HOMOACONITASE, MITOCHONDRIAL-RELATED"/>
    <property type="match status" value="1"/>
</dbReference>
<dbReference type="Pfam" id="PF00330">
    <property type="entry name" value="Aconitase"/>
    <property type="match status" value="1"/>
</dbReference>
<dbReference type="PRINTS" id="PR00415">
    <property type="entry name" value="ACONITASE"/>
</dbReference>
<dbReference type="SUPFAM" id="SSF53732">
    <property type="entry name" value="Aconitase iron-sulfur domain"/>
    <property type="match status" value="1"/>
</dbReference>
<dbReference type="PROSITE" id="PS00450">
    <property type="entry name" value="ACONITASE_1"/>
    <property type="match status" value="1"/>
</dbReference>
<dbReference type="PROSITE" id="PS01244">
    <property type="entry name" value="ACONITASE_2"/>
    <property type="match status" value="1"/>
</dbReference>
<protein>
    <recommendedName>
        <fullName evidence="1">3-isopropylmalate dehydratase large subunit</fullName>
        <ecNumber evidence="1">4.2.1.33</ecNumber>
    </recommendedName>
    <alternativeName>
        <fullName evidence="1">Alpha-IPM isomerase</fullName>
        <shortName evidence="1">IPMI</shortName>
    </alternativeName>
    <alternativeName>
        <fullName evidence="1">Isopropylmalate isomerase</fullName>
    </alternativeName>
</protein>
<sequence>MGQTLTEKIFSAHTNKQVSAGEIIESPIDMVIGNDITTPLSIRAFEESGATKLANPDGFCIVMDHFIPAKDIASANQARISRDFAKKHQLKHYFDERDMGIEHAILPEKGLVLPGDVIIGADSHTCTHGALGAFATGMGSTDLAYAMITGKNWFKVPPSIRVVFKGKLQEHVYGKDLILEIIRQIGVDGALYKALEFQGDTIEQLSMDDRFSLCNMAIEAGAKNGIIAADSITKEFLASRKSLRAEPKYYQADADALYEQTIEIDVEKLEPVIAYPFLPSNGKSISQAVKDDLKIDQAFIGSCTNGRLSDLRIAAQILKGKRVHPDVRLIITPGTQQIYKDAHQEGLIDTLLEAGALISNPTCGACLGGYMGILGDNERCVSTTNRNFVGRMGARSSEVYLANSAVAAASALKGKITDPRKL</sequence>
<name>LEUC_WOLSU</name>
<evidence type="ECO:0000255" key="1">
    <source>
        <dbReference type="HAMAP-Rule" id="MF_01027"/>
    </source>
</evidence>
<gene>
    <name evidence="1" type="primary">leuC</name>
    <name type="ordered locus">WS0559</name>
</gene>
<reference key="1">
    <citation type="journal article" date="2003" name="Proc. Natl. Acad. Sci. U.S.A.">
        <title>Complete genome sequence and analysis of Wolinella succinogenes.</title>
        <authorList>
            <person name="Baar C."/>
            <person name="Eppinger M."/>
            <person name="Raddatz G."/>
            <person name="Simon J."/>
            <person name="Lanz C."/>
            <person name="Klimmek O."/>
            <person name="Nandakumar R."/>
            <person name="Gross R."/>
            <person name="Rosinus A."/>
            <person name="Keller H."/>
            <person name="Jagtap P."/>
            <person name="Linke B."/>
            <person name="Meyer F."/>
            <person name="Lederer H."/>
            <person name="Schuster S.C."/>
        </authorList>
    </citation>
    <scope>NUCLEOTIDE SEQUENCE [LARGE SCALE GENOMIC DNA]</scope>
    <source>
        <strain>ATCC 29543 / DSM 1740 / CCUG 13145 / JCM 31913 / LMG 7466 / NCTC 11488 / FDC 602W</strain>
    </source>
</reference>
<keyword id="KW-0004">4Fe-4S</keyword>
<keyword id="KW-0028">Amino-acid biosynthesis</keyword>
<keyword id="KW-0100">Branched-chain amino acid biosynthesis</keyword>
<keyword id="KW-0408">Iron</keyword>
<keyword id="KW-0411">Iron-sulfur</keyword>
<keyword id="KW-0432">Leucine biosynthesis</keyword>
<keyword id="KW-0456">Lyase</keyword>
<keyword id="KW-0479">Metal-binding</keyword>
<keyword id="KW-1185">Reference proteome</keyword>
<comment type="function">
    <text evidence="1">Catalyzes the isomerization between 2-isopropylmalate and 3-isopropylmalate, via the formation of 2-isopropylmaleate.</text>
</comment>
<comment type="catalytic activity">
    <reaction evidence="1">
        <text>(2R,3S)-3-isopropylmalate = (2S)-2-isopropylmalate</text>
        <dbReference type="Rhea" id="RHEA:32287"/>
        <dbReference type="ChEBI" id="CHEBI:1178"/>
        <dbReference type="ChEBI" id="CHEBI:35121"/>
        <dbReference type="EC" id="4.2.1.33"/>
    </reaction>
</comment>
<comment type="cofactor">
    <cofactor evidence="1">
        <name>[4Fe-4S] cluster</name>
        <dbReference type="ChEBI" id="CHEBI:49883"/>
    </cofactor>
    <text evidence="1">Binds 1 [4Fe-4S] cluster per subunit.</text>
</comment>
<comment type="pathway">
    <text evidence="1">Amino-acid biosynthesis; L-leucine biosynthesis; L-leucine from 3-methyl-2-oxobutanoate: step 2/4.</text>
</comment>
<comment type="subunit">
    <text evidence="1">Heterodimer of LeuC and LeuD.</text>
</comment>
<comment type="similarity">
    <text evidence="1">Belongs to the aconitase/IPM isomerase family. LeuC type 2 subfamily.</text>
</comment>
<feature type="chain" id="PRO_0000076863" description="3-isopropylmalate dehydratase large subunit">
    <location>
        <begin position="1"/>
        <end position="422"/>
    </location>
</feature>
<feature type="binding site" evidence="1">
    <location>
        <position position="303"/>
    </location>
    <ligand>
        <name>[4Fe-4S] cluster</name>
        <dbReference type="ChEBI" id="CHEBI:49883"/>
    </ligand>
</feature>
<feature type="binding site" evidence="1">
    <location>
        <position position="363"/>
    </location>
    <ligand>
        <name>[4Fe-4S] cluster</name>
        <dbReference type="ChEBI" id="CHEBI:49883"/>
    </ligand>
</feature>
<feature type="binding site" evidence="1">
    <location>
        <position position="366"/>
    </location>
    <ligand>
        <name>[4Fe-4S] cluster</name>
        <dbReference type="ChEBI" id="CHEBI:49883"/>
    </ligand>
</feature>
<organism>
    <name type="scientific">Wolinella succinogenes (strain ATCC 29543 / DSM 1740 / CCUG 13145 / JCM 31913 / LMG 7466 / NCTC 11488 / FDC 602W)</name>
    <name type="common">Vibrio succinogenes</name>
    <dbReference type="NCBI Taxonomy" id="273121"/>
    <lineage>
        <taxon>Bacteria</taxon>
        <taxon>Pseudomonadati</taxon>
        <taxon>Campylobacterota</taxon>
        <taxon>Epsilonproteobacteria</taxon>
        <taxon>Campylobacterales</taxon>
        <taxon>Helicobacteraceae</taxon>
        <taxon>Wolinella</taxon>
    </lineage>
</organism>
<proteinExistence type="inferred from homology"/>
<accession>Q7M9Z9</accession>